<protein>
    <recommendedName>
        <fullName evidence="2">Oligosaccharyltransferase complex subunit ostc-B</fullName>
    </recommendedName>
</protein>
<reference key="1">
    <citation type="submission" date="2004-12" db="EMBL/GenBank/DDBJ databases">
        <authorList>
            <consortium name="NIH - Xenopus Gene Collection (XGC) project"/>
        </authorList>
    </citation>
    <scope>NUCLEOTIDE SEQUENCE [LARGE SCALE MRNA]</scope>
    <source>
        <tissue>Testis</tissue>
    </source>
</reference>
<keyword id="KW-0472">Membrane</keyword>
<keyword id="KW-1185">Reference proteome</keyword>
<keyword id="KW-0812">Transmembrane</keyword>
<keyword id="KW-1133">Transmembrane helix</keyword>
<dbReference type="EMBL" id="BC087303">
    <property type="protein sequence ID" value="AAH87303.1"/>
    <property type="molecule type" value="mRNA"/>
</dbReference>
<dbReference type="RefSeq" id="NP_001088833.1">
    <property type="nucleotide sequence ID" value="NM_001095364.1"/>
</dbReference>
<dbReference type="RefSeq" id="XP_018094464.1">
    <property type="nucleotide sequence ID" value="XM_018238975.1"/>
</dbReference>
<dbReference type="RefSeq" id="XP_018094475.1">
    <property type="nucleotide sequence ID" value="XM_018238986.1"/>
</dbReference>
<dbReference type="RefSeq" id="XP_018094482.1">
    <property type="nucleotide sequence ID" value="XM_018238993.1"/>
</dbReference>
<dbReference type="RefSeq" id="XP_018094491.1">
    <property type="nucleotide sequence ID" value="XM_018239002.1"/>
</dbReference>
<dbReference type="SMR" id="Q5M9B7"/>
<dbReference type="DNASU" id="496140"/>
<dbReference type="GeneID" id="496140"/>
<dbReference type="KEGG" id="xla:496140"/>
<dbReference type="AGR" id="Xenbase:XB-GENE-974369"/>
<dbReference type="CTD" id="496140"/>
<dbReference type="Xenbase" id="XB-GENE-974369">
    <property type="gene designation" value="ostc.S"/>
</dbReference>
<dbReference type="OMA" id="CWIFMRM"/>
<dbReference type="OrthoDB" id="10256333at2759"/>
<dbReference type="UniPathway" id="UPA00378"/>
<dbReference type="Proteomes" id="UP000186698">
    <property type="component" value="Chromosome 1S"/>
</dbReference>
<dbReference type="Bgee" id="496140">
    <property type="expression patterns" value="Expressed in oocyte and 20 other cell types or tissues"/>
</dbReference>
<dbReference type="GO" id="GO:0008250">
    <property type="term" value="C:oligosaccharyltransferase complex"/>
    <property type="evidence" value="ECO:0000318"/>
    <property type="project" value="GO_Central"/>
</dbReference>
<dbReference type="GO" id="GO:0006486">
    <property type="term" value="P:protein glycosylation"/>
    <property type="evidence" value="ECO:0007669"/>
    <property type="project" value="UniProtKB-UniPathway"/>
</dbReference>
<dbReference type="InterPro" id="IPR021149">
    <property type="entry name" value="OligosaccharylTrfase_OST3/OST6"/>
</dbReference>
<dbReference type="InterPro" id="IPR042416">
    <property type="entry name" value="OSTC"/>
</dbReference>
<dbReference type="PANTHER" id="PTHR13160">
    <property type="entry name" value="OLIGOSACCHARYLTRANSFERASE COMPLEX SUBUNIT OSTC"/>
    <property type="match status" value="1"/>
</dbReference>
<dbReference type="PANTHER" id="PTHR13160:SF4">
    <property type="entry name" value="OLIGOSACCHARYLTRANSFERASE COMPLEX SUBUNIT OSTC"/>
    <property type="match status" value="1"/>
</dbReference>
<dbReference type="Pfam" id="PF04756">
    <property type="entry name" value="OST3_OST6"/>
    <property type="match status" value="1"/>
</dbReference>
<accession>Q5M9B7</accession>
<organism>
    <name type="scientific">Xenopus laevis</name>
    <name type="common">African clawed frog</name>
    <dbReference type="NCBI Taxonomy" id="8355"/>
    <lineage>
        <taxon>Eukaryota</taxon>
        <taxon>Metazoa</taxon>
        <taxon>Chordata</taxon>
        <taxon>Craniata</taxon>
        <taxon>Vertebrata</taxon>
        <taxon>Euteleostomi</taxon>
        <taxon>Amphibia</taxon>
        <taxon>Batrachia</taxon>
        <taxon>Anura</taxon>
        <taxon>Pipoidea</taxon>
        <taxon>Pipidae</taxon>
        <taxon>Xenopodinae</taxon>
        <taxon>Xenopus</taxon>
        <taxon>Xenopus</taxon>
    </lineage>
</organism>
<evidence type="ECO:0000250" key="1">
    <source>
        <dbReference type="UniProtKB" id="P86218"/>
    </source>
</evidence>
<evidence type="ECO:0000250" key="2">
    <source>
        <dbReference type="UniProtKB" id="Q9NRP0"/>
    </source>
</evidence>
<evidence type="ECO:0000255" key="3"/>
<evidence type="ECO:0000305" key="4"/>
<feature type="chain" id="PRO_0000320607" description="Oligosaccharyltransferase complex subunit ostc-B">
    <location>
        <begin position="1"/>
        <end position="149"/>
    </location>
</feature>
<feature type="topological domain" description="Cytoplasmic" evidence="3">
    <location>
        <begin position="1"/>
        <end position="32"/>
    </location>
</feature>
<feature type="transmembrane region" description="Helical" evidence="3">
    <location>
        <begin position="33"/>
        <end position="53"/>
    </location>
</feature>
<feature type="topological domain" description="Extracellular" evidence="3">
    <location>
        <begin position="54"/>
        <end position="83"/>
    </location>
</feature>
<feature type="transmembrane region" description="Helical" evidence="3">
    <location>
        <begin position="84"/>
        <end position="104"/>
    </location>
</feature>
<feature type="topological domain" description="Cytoplasmic" evidence="3">
    <location>
        <begin position="105"/>
        <end position="117"/>
    </location>
</feature>
<feature type="transmembrane region" description="Helical" evidence="3">
    <location>
        <begin position="118"/>
        <end position="138"/>
    </location>
</feature>
<feature type="topological domain" description="Extracellular" evidence="3">
    <location>
        <begin position="139"/>
        <end position="149"/>
    </location>
</feature>
<name>OSTCB_XENLA</name>
<gene>
    <name evidence="2" type="primary">ostc-b</name>
</gene>
<comment type="function">
    <text evidence="2">Specific component of the STT3A-containing form of the oligosaccharyl transferase (OST) complex that catalyzes the initial transfer of a defined glycan (Glc(3)Man(9)GlcNAc(2) in eukaryotes) from the lipid carrier dolichol-pyrophosphate to an asparagine residue within an Asn-X-Ser/Thr consensus motif in nascent polypeptide chains, the first step in protein N-glycosylation. N-glycosylation occurs cotranslationally and the complex associates with the Sec61 complex at the channel-forming translocon complex that mediates protein translocation across the endoplasmic reticulum (ER). All subunits are required for a maximal enzyme activity.</text>
</comment>
<comment type="pathway">
    <text evidence="2">Protein modification; protein glycosylation.</text>
</comment>
<comment type="subunit">
    <text evidence="1">Specific component of the STT3A-containing form of the oligosaccharyltransferase (OST) complex.</text>
</comment>
<comment type="subcellular location">
    <subcellularLocation>
        <location evidence="4">Membrane</location>
        <topology evidence="4">Multi-pass membrane protein</topology>
    </subcellularLocation>
</comment>
<comment type="similarity">
    <text evidence="4">Belongs to the OSTC family.</text>
</comment>
<proteinExistence type="evidence at transcript level"/>
<sequence length="149" mass="16825">MESLYRIPFTVLECPNLKLKKPSWLHMPSAMTVYAMVVVSYFLITGGIIYDVIVEPPSVGSMTDEHGHQRPVAFLAYRVNGQYIMEGLASSFLFTMGGLGFIILDRSNAPNIPKLNRFLLLFIGFVCVLLSFFMARVFMRMKLPGYLMG</sequence>